<reference key="1">
    <citation type="journal article" date="1989" name="Mol. Cell. Biol.">
        <title>Tau consists of a set of proteins with repeated C-terminal microtubule-binding domains and variable N-terminal domains.</title>
        <authorList>
            <person name="Himmler A."/>
            <person name="Drechsel D."/>
            <person name="Kirschner M.W."/>
            <person name="Martin D.W. Jr."/>
        </authorList>
    </citation>
    <scope>NUCLEOTIDE SEQUENCE [MRNA] (ISOFORMS TAU-A; TAU-B; TAU-G AND TAU-H)</scope>
    <source>
        <tissue>Brain</tissue>
    </source>
</reference>
<reference key="2">
    <citation type="journal article" date="1989" name="Mol. Cell. Biol.">
        <title>Structure of the bovine tau gene: alternatively spliced transcripts generate a protein family.</title>
        <authorList>
            <person name="Himmler A."/>
        </authorList>
    </citation>
    <scope>NUCLEOTIDE SEQUENCE [GENOMIC DNA] (ISOFORMS TAU-A; TAU-B; TAU-C; TAU-D; TAU-E; TAU-F; TAU-I; TAU-J; TAU-K; TAU-L; TAU-M; TAU-N; TAU-O; TAU-P; TAU-Q; TAU-R; TAU-S AND TAU-T)</scope>
    <source>
        <tissue>Brain</tissue>
    </source>
</reference>
<reference key="3">
    <citation type="submission" date="2005-11" db="EMBL/GenBank/DDBJ databases">
        <authorList>
            <consortium name="NIH - Mammalian Gene Collection (MGC) project"/>
        </authorList>
    </citation>
    <scope>NUCLEOTIDE SEQUENCE [LARGE SCALE MRNA] (ISOFORM TAU-F)</scope>
    <source>
        <strain>Crossbred X Angus</strain>
        <tissue>Liver</tissue>
    </source>
</reference>
<reference key="4">
    <citation type="journal article" date="1996" name="J. Biol. Chem.">
        <title>The microtubule-associated protein tau is extensively modified with O-linked N-acetylglucosamine.</title>
        <authorList>
            <person name="Arnold C.S."/>
            <person name="Johnson G.V.W."/>
            <person name="Cole R.N."/>
            <person name="Dong D.L.-Y."/>
            <person name="Lee M."/>
            <person name="Hart G.W."/>
        </authorList>
    </citation>
    <scope>GLYCOSYLATION</scope>
</reference>
<feature type="initiator methionine" description="Removed" evidence="2">
    <location>
        <position position="1"/>
    </location>
</feature>
<feature type="chain" id="PRO_0000072736" description="Microtubule-associated protein tau">
    <location>
        <begin position="2"/>
        <end position="448"/>
    </location>
</feature>
<feature type="repeat" description="Tau/MAP 1" evidence="5">
    <location>
        <begin position="251"/>
        <end position="281"/>
    </location>
</feature>
<feature type="repeat" description="Tau/MAP 2" evidence="5">
    <location>
        <begin position="282"/>
        <end position="312"/>
    </location>
</feature>
<feature type="repeat" description="Tau/MAP 3" evidence="5">
    <location>
        <begin position="313"/>
        <end position="343"/>
    </location>
</feature>
<feature type="repeat" description="Tau/MAP 4" evidence="5">
    <location>
        <begin position="344"/>
        <end position="375"/>
    </location>
</feature>
<feature type="region of interest" description="Disordered" evidence="6">
    <location>
        <begin position="1"/>
        <end position="264"/>
    </location>
</feature>
<feature type="region of interest" description="Disordered" evidence="6">
    <location>
        <begin position="405"/>
        <end position="424"/>
    </location>
</feature>
<feature type="compositionally biased region" description="Basic and acidic residues" evidence="6">
    <location>
        <begin position="1"/>
        <end position="16"/>
    </location>
</feature>
<feature type="compositionally biased region" description="Polar residues" evidence="6">
    <location>
        <begin position="50"/>
        <end position="60"/>
    </location>
</feature>
<feature type="compositionally biased region" description="Low complexity" evidence="6">
    <location>
        <begin position="71"/>
        <end position="89"/>
    </location>
</feature>
<feature type="compositionally biased region" description="Basic and acidic residues" evidence="6">
    <location>
        <begin position="119"/>
        <end position="135"/>
    </location>
</feature>
<feature type="compositionally biased region" description="Low complexity" evidence="6">
    <location>
        <begin position="163"/>
        <end position="176"/>
    </location>
</feature>
<feature type="compositionally biased region" description="Basic and acidic residues" evidence="6">
    <location>
        <begin position="189"/>
        <end position="200"/>
    </location>
</feature>
<feature type="compositionally biased region" description="Low complexity" evidence="6">
    <location>
        <begin position="201"/>
        <end position="221"/>
    </location>
</feature>
<feature type="compositionally biased region" description="Polar residues" evidence="6">
    <location>
        <begin position="408"/>
        <end position="423"/>
    </location>
</feature>
<feature type="modified residue" description="N-acetylalanine" evidence="2">
    <location>
        <position position="2"/>
    </location>
</feature>
<feature type="modified residue" description="Phosphotyrosine" evidence="3">
    <location>
        <position position="19"/>
    </location>
</feature>
<feature type="modified residue" description="Phosphoserine" evidence="4">
    <location>
        <position position="35"/>
    </location>
</feature>
<feature type="modified residue" description="Phosphoserine" evidence="4">
    <location>
        <position position="50"/>
    </location>
</feature>
<feature type="modified residue" description="Phosphothreonine" evidence="3">
    <location>
        <position position="58"/>
    </location>
</feature>
<feature type="modified residue" description="Phosphothreonine" evidence="4">
    <location>
        <position position="60"/>
    </location>
</feature>
<feature type="modified residue" description="Phosphothreonine" evidence="3">
    <location>
        <position position="100"/>
    </location>
</feature>
<feature type="modified residue" description="Phosphothreonine" evidence="2">
    <location>
        <position position="144"/>
    </location>
</feature>
<feature type="modified residue" description="Omega-N-methylarginine" evidence="3">
    <location>
        <position position="146"/>
    </location>
</feature>
<feature type="modified residue" description="N6,N6-dimethyllysine; alternate" evidence="3">
    <location>
        <position position="154"/>
    </location>
</feature>
<feature type="modified residue" description="N6-acetyllysine; alternate" evidence="3">
    <location>
        <position position="154"/>
    </location>
</feature>
<feature type="modified residue" description="Phosphothreonine" evidence="3">
    <location>
        <position position="160"/>
    </location>
</feature>
<feature type="modified residue" description="Phosphothreonine" evidence="3">
    <location>
        <position position="166"/>
    </location>
</feature>
<feature type="modified residue" description="Phosphothreonine" evidence="3">
    <location>
        <position position="167"/>
    </location>
</feature>
<feature type="modified residue" description="Phosphothreonine" evidence="2">
    <location>
        <position position="172"/>
    </location>
</feature>
<feature type="modified residue" description="Phosphoserine" evidence="3">
    <location>
        <position position="198"/>
    </location>
</feature>
<feature type="modified residue" description="Phosphoserine" evidence="3">
    <location>
        <position position="202"/>
    </location>
</feature>
<feature type="modified residue" description="Phosphotyrosine" evidence="2">
    <location>
        <position position="204"/>
    </location>
</feature>
<feature type="modified residue" description="Phosphoserine" evidence="2">
    <location>
        <position position="205"/>
    </location>
</feature>
<feature type="modified residue" description="Phosphoserine" evidence="2">
    <location>
        <position position="206"/>
    </location>
</feature>
<feature type="modified residue" description="Phosphoserine" evidence="2">
    <location>
        <position position="209"/>
    </location>
</feature>
<feature type="modified residue" description="Phosphothreonine" evidence="2">
    <location>
        <position position="212"/>
    </location>
</feature>
<feature type="modified residue" description="Phosphothreonine" evidence="2">
    <location>
        <position position="219"/>
    </location>
</feature>
<feature type="modified residue" description="Phosphoserine" evidence="2">
    <location>
        <position position="221"/>
    </location>
</feature>
<feature type="modified residue" description="Phosphothreonine" evidence="2">
    <location>
        <position position="224"/>
    </location>
</feature>
<feature type="modified residue" description="N6-acetyllysine" evidence="3">
    <location>
        <position position="232"/>
    </location>
</feature>
<feature type="modified residue" description="Phosphothreonine" evidence="2">
    <location>
        <position position="238"/>
    </location>
</feature>
<feature type="modified residue" description="Phosphoserine" evidence="2">
    <location>
        <position position="242"/>
    </location>
</feature>
<feature type="modified residue" description="Phosphoserine" evidence="2">
    <location>
        <position position="244"/>
    </location>
</feature>
<feature type="modified residue" description="N6-acetyllysine; alternate" evidence="3">
    <location>
        <position position="266"/>
    </location>
</feature>
<feature type="modified residue" description="N6-methyllysine; alternate" evidence="3">
    <location>
        <position position="266"/>
    </location>
</feature>
<feature type="modified residue" description="Phosphoserine" evidence="2">
    <location>
        <position position="269"/>
    </location>
</feature>
<feature type="modified residue" description="N6-acetyllysine; alternate" evidence="3">
    <location>
        <position position="288"/>
    </location>
</feature>
<feature type="modified residue" description="Phosphoserine" evidence="2">
    <location>
        <position position="292"/>
    </location>
</feature>
<feature type="modified residue" description="Phosphoserine" evidence="2">
    <location>
        <position position="296"/>
    </location>
</feature>
<feature type="modified residue" description="N6-acetyllysine" evidence="3">
    <location>
        <position position="297"/>
    </location>
</feature>
<feature type="modified residue" description="Phosphoserine" evidence="2">
    <location>
        <position position="300"/>
    </location>
</feature>
<feature type="modified residue" description="N6-acetyllysine; alternate" evidence="3">
    <location>
        <position position="305"/>
    </location>
</feature>
<feature type="modified residue" description="Phosphoserine" evidence="2">
    <location>
        <position position="312"/>
    </location>
</feature>
<feature type="modified residue" description="N6,N6-dimethyllysine; alternate" evidence="3">
    <location>
        <position position="318"/>
    </location>
</feature>
<feature type="modified residue" description="N6-acetyllysine; alternate" evidence="3">
    <location>
        <position position="318"/>
    </location>
</feature>
<feature type="modified residue" description="N6-acetyllysine; alternate" evidence="3">
    <location>
        <position position="324"/>
    </location>
</feature>
<feature type="modified residue" description="N6-acetyllysine; alternate" evidence="3">
    <location>
        <position position="328"/>
    </location>
</feature>
<feature type="modified residue" description="Phosphoserine" evidence="2">
    <location>
        <position position="331"/>
    </location>
</feature>
<feature type="modified residue" description="N6-acetyllysine; alternate" evidence="3">
    <location>
        <position position="338"/>
    </location>
</feature>
<feature type="modified residue" description="N6-acetyllysine; alternate" evidence="3">
    <location>
        <position position="350"/>
    </location>
</feature>
<feature type="modified residue" description="N6-acetyllysine; alternate" evidence="3">
    <location>
        <position position="354"/>
    </location>
</feature>
<feature type="modified residue" description="Omega-N-methylarginine" evidence="3">
    <location>
        <position position="356"/>
    </location>
</feature>
<feature type="modified residue" description="Phosphoserine" evidence="2">
    <location>
        <position position="359"/>
    </location>
</feature>
<feature type="modified residue" description="Phosphoserine" evidence="2">
    <location>
        <position position="363"/>
    </location>
</feature>
<feature type="modified residue" description="N6-acetyllysine; alternate" evidence="3">
    <location>
        <position position="376"/>
    </location>
</feature>
<feature type="modified residue" description="N6-acetyllysine; alternate" evidence="3">
    <location>
        <position position="392"/>
    </location>
</feature>
<feature type="modified residue" description="Phosphotyrosine" evidence="3">
    <location>
        <position position="401"/>
    </location>
</feature>
<feature type="modified residue" description="Phosphoserine" evidence="2">
    <location>
        <position position="403"/>
    </location>
</feature>
<feature type="modified residue" description="Phosphoserine" evidence="2">
    <location>
        <position position="407"/>
    </location>
</feature>
<feature type="modified residue" description="Phosphothreonine" evidence="3">
    <location>
        <position position="410"/>
    </location>
</feature>
<feature type="modified residue" description="Phosphoserine" evidence="2">
    <location>
        <position position="411"/>
    </location>
</feature>
<feature type="modified residue" description="Phosphoserine" evidence="2">
    <location>
        <position position="416"/>
    </location>
</feature>
<feature type="modified residue" description="Phosphoserine" evidence="2">
    <location>
        <position position="423"/>
    </location>
</feature>
<feature type="modified residue" description="Phosphoserine" evidence="2">
    <location>
        <position position="429"/>
    </location>
</feature>
<feature type="modified residue" description="Phosphothreonine" evidence="2">
    <location>
        <position position="434"/>
    </location>
</feature>
<feature type="disulfide bond" evidence="1">
    <location>
        <begin position="298"/>
        <end position="329"/>
    </location>
</feature>
<feature type="cross-link" description="Glycyl lysine isopeptide (Lys-Gly) (interchain with G-Cter in ubiquitin)" evidence="3">
    <location>
        <position position="33"/>
    </location>
</feature>
<feature type="cross-link" description="Glycyl lysine isopeptide (Lys-Gly) (interchain with G-Cter in ubiquitin)" evidence="2">
    <location>
        <position position="261"/>
    </location>
</feature>
<feature type="cross-link" description="Glycyl lysine isopeptide (Lys-Gly) (interchain with G-Cter in ubiquitin); alternate" evidence="3">
    <location>
        <position position="266"/>
    </location>
</feature>
<feature type="cross-link" description="Glycyl lysine isopeptide (Lys-Gly) (interchain with G-Cter in ubiquitin)" evidence="3">
    <location>
        <position position="274"/>
    </location>
</feature>
<feature type="cross-link" description="Glycyl lysine isopeptide (Lys-Gly) (interchain with G-Cter in ubiquitin); alternate" evidence="3">
    <location>
        <position position="288"/>
    </location>
</feature>
<feature type="cross-link" description="Glycyl lysine isopeptide (Lys-Gly) (interchain with G-Cter in ubiquitin); alternate" evidence="3">
    <location>
        <position position="305"/>
    </location>
</feature>
<feature type="cross-link" description="Glycyl lysine isopeptide (Lys-Gly) (interchain with G-Cter in ubiquitin); alternate" evidence="2">
    <location>
        <position position="318"/>
    </location>
</feature>
<feature type="cross-link" description="Glycyl lysine isopeptide (Lys-Gly) (interchain with G-Cter in ubiquitin); alternate" evidence="3">
    <location>
        <position position="324"/>
    </location>
</feature>
<feature type="cross-link" description="Glycyl lysine isopeptide (Lys-Gly) (interchain with G-Cter in ubiquitin); alternate" evidence="3">
    <location>
        <position position="328"/>
    </location>
</feature>
<feature type="cross-link" description="Glycyl lysine isopeptide (Lys-Gly) (interchain with G-Cter in ubiquitin); alternate" evidence="3">
    <location>
        <position position="338"/>
    </location>
</feature>
<feature type="cross-link" description="Glycyl lysine isopeptide (Lys-Gly) (interchain with G-Cter in ubiquitin); alternate" evidence="3">
    <location>
        <position position="350"/>
    </location>
</feature>
<feature type="cross-link" description="Glycyl lysine isopeptide (Lys-Gly) (interchain with G-Cter in ubiquitin); alternate" evidence="3">
    <location>
        <position position="354"/>
    </location>
</feature>
<feature type="cross-link" description="Glycyl lysine isopeptide (Lys-Gly) (interchain with G-Cter in ubiquitin)" evidence="2">
    <location>
        <position position="360"/>
    </location>
</feature>
<feature type="cross-link" description="Glycyl lysine isopeptide (Lys-Gly) (interchain with G-Cter in ubiquitin); alternate" evidence="3">
    <location>
        <position position="376"/>
    </location>
</feature>
<feature type="cross-link" description="Glycyl lysine isopeptide (Lys-Gly) (interchain with G-Cter in ubiquitin)" evidence="3">
    <location>
        <position position="382"/>
    </location>
</feature>
<feature type="cross-link" description="Glycyl lysine isopeptide (Lys-Gly) (interchain with G-Cter in ubiquitin); alternate" evidence="3">
    <location>
        <position position="392"/>
    </location>
</feature>
<feature type="splice variant" id="VSP_003165" description="In isoform Tau-G." evidence="8">
    <original>MAEPRQEFDVMEDHAQGDYTLQDQEGDMDPGLKESPLQTPADDGSEEPGSETSDAKSTPTAEDATAPLVDEGAPGEQAAAQAPAEIPEGTAAEEAGIGDTSNLEDQAAGHVTQARMVSKGKDGTGPDDKKT</original>
    <variation>MPLNHYLPYLFLVSVLFQFVPFSHVLTFILILFMFMFKPSTPSSAKTLKNRPCLSPKRPTPGSSDPLIKPSSPAVCPEPSSSPKHVSSVTPRTGNSGAKEMKVK</variation>
    <location>
        <begin position="1"/>
        <end position="131"/>
    </location>
</feature>
<feature type="splice variant" id="VSP_003166" description="In isoform Tau-H." evidence="8">
    <original>MAEPRQEFDVMEDHAQGDYTLQDQEGDMDPGLKESPLQTPADDGSEEPGSETSDAKSTPTAEDATAPLVDEGAPGEQAAAQAPAEIPEGTAAEEAGIGDTSNLEDQAAGHVTQARMVSKGKDGTGPDDKKT</original>
    <variation>MKVK</variation>
    <location>
        <begin position="1"/>
        <end position="131"/>
    </location>
</feature>
<feature type="splice variant" id="VSP_003167" description="In isoform Tau-D, isoform Tau-E, isoform Tau-F, isoform Tau-J, isoform Tau-K, isoform Tau-L, isoform Tau-M, isoform Tau-N, isoform Tau-P, isoform Tau-Q, isoform Tau-R, isoform Tau-S and isoform Tau-T." evidence="9">
    <location>
        <begin position="63"/>
        <end position="91"/>
    </location>
</feature>
<feature type="splice variant" id="VSP_003168" description="In isoform Tau-L, isoform Tau-M, isoform Tau-N, isoform Tau-R, isoform Tau-S and isoform Tau-T." evidence="10">
    <location>
        <begin position="92"/>
        <end position="113"/>
    </location>
</feature>
<feature type="splice variant" id="VSP_003169" description="In isoform Tau-B, isoform Tau-C, isoform Tau-E, isoform Tau-F, isoform Tau-G, isoform Tau-H, isoform Tau-J, isoform Tau-K, isoform Tau-M, isoform Tau-N, isoform Tau-P, isoform Tau-Q, isoform Tau-S and isoform Tau-T." evidence="8 9">
    <location>
        <begin position="175"/>
        <end position="192"/>
    </location>
</feature>
<feature type="splice variant" id="VSP_003170" description="In isoform Tau-C, isoform Tau-F, isoform Tau-K, isoform Tau-N, isoform Tau-Q and isoform Tau-T." evidence="9">
    <location>
        <begin position="282"/>
        <end position="312"/>
    </location>
</feature>
<feature type="splice variant" id="VSP_003171" description="In isoform Tau-I, isoform Tau-J, isoform Tau-K, isoform Tau-L, isoform Tau-M and isoform Tau-N." evidence="10">
    <original>VSASLAKQGL</original>
    <variation>PCVCPHHACVSAVRSLVTACPLTTSCCPEFPASPPTPSR</variation>
    <location>
        <begin position="439"/>
        <end position="448"/>
    </location>
</feature>
<feature type="splice variant" id="VSP_003172" description="In isoform Tau-O, isoform Tau-P, isoform Tau-Q, isoform Tau-R, isoform Tau-S and isoform Tau-T." evidence="10">
    <original>GL</original>
    <variation>ALRLPPPRLCVCRAEPGHCLSPHYVMLSRVPRLATHPFSVMDIVPMGRHLLYTKGEVKEGEVQTPGPPSL</variation>
    <location>
        <begin position="447"/>
        <end position="448"/>
    </location>
</feature>
<gene>
    <name type="primary">MAPT</name>
    <name type="synonym">TAU</name>
</gene>
<keyword id="KW-0007">Acetylation</keyword>
<keyword id="KW-0025">Alternative splicing</keyword>
<keyword id="KW-1003">Cell membrane</keyword>
<keyword id="KW-0966">Cell projection</keyword>
<keyword id="KW-0963">Cytoplasm</keyword>
<keyword id="KW-0206">Cytoskeleton</keyword>
<keyword id="KW-1015">Disulfide bond</keyword>
<keyword id="KW-0325">Glycoprotein</keyword>
<keyword id="KW-1017">Isopeptide bond</keyword>
<keyword id="KW-0472">Membrane</keyword>
<keyword id="KW-0488">Methylation</keyword>
<keyword id="KW-0493">Microtubule</keyword>
<keyword id="KW-0597">Phosphoprotein</keyword>
<keyword id="KW-1185">Reference proteome</keyword>
<keyword id="KW-0677">Repeat</keyword>
<keyword id="KW-0964">Secreted</keyword>
<keyword id="KW-0832">Ubl conjugation</keyword>
<dbReference type="EMBL" id="L34953">
    <property type="protein sequence ID" value="AAA51609.1"/>
    <property type="molecule type" value="mRNA"/>
</dbReference>
<dbReference type="EMBL" id="L34940">
    <property type="protein sequence ID" value="AAA51609.1"/>
    <property type="status" value="JOINED"/>
    <property type="molecule type" value="Genomic_DNA"/>
</dbReference>
<dbReference type="EMBL" id="L34941">
    <property type="protein sequence ID" value="AAA51609.1"/>
    <property type="status" value="JOINED"/>
    <property type="molecule type" value="Genomic_DNA"/>
</dbReference>
<dbReference type="EMBL" id="L34942">
    <property type="protein sequence ID" value="AAA51609.1"/>
    <property type="status" value="JOINED"/>
    <property type="molecule type" value="Genomic_DNA"/>
</dbReference>
<dbReference type="EMBL" id="L34943">
    <property type="protein sequence ID" value="AAA51609.1"/>
    <property type="status" value="JOINED"/>
    <property type="molecule type" value="Genomic_DNA"/>
</dbReference>
<dbReference type="EMBL" id="L34944">
    <property type="protein sequence ID" value="AAA51609.1"/>
    <property type="status" value="JOINED"/>
    <property type="molecule type" value="Genomic_DNA"/>
</dbReference>
<dbReference type="EMBL" id="L34946">
    <property type="protein sequence ID" value="AAA51609.1"/>
    <property type="status" value="JOINED"/>
    <property type="molecule type" value="Genomic_DNA"/>
</dbReference>
<dbReference type="EMBL" id="L34947">
    <property type="protein sequence ID" value="AAA51609.1"/>
    <property type="status" value="JOINED"/>
    <property type="molecule type" value="Genomic_DNA"/>
</dbReference>
<dbReference type="EMBL" id="L34948">
    <property type="protein sequence ID" value="AAA51609.1"/>
    <property type="status" value="JOINED"/>
    <property type="molecule type" value="Genomic_DNA"/>
</dbReference>
<dbReference type="EMBL" id="L34949">
    <property type="protein sequence ID" value="AAA51609.1"/>
    <property type="status" value="JOINED"/>
    <property type="molecule type" value="Genomic_DNA"/>
</dbReference>
<dbReference type="EMBL" id="L34950">
    <property type="protein sequence ID" value="AAA51609.1"/>
    <property type="status" value="JOINED"/>
    <property type="molecule type" value="Genomic_DNA"/>
</dbReference>
<dbReference type="EMBL" id="L34951">
    <property type="protein sequence ID" value="AAA51609.1"/>
    <property type="status" value="JOINED"/>
    <property type="molecule type" value="Genomic_DNA"/>
</dbReference>
<dbReference type="EMBL" id="L34952">
    <property type="protein sequence ID" value="AAA51609.1"/>
    <property type="status" value="JOINED"/>
    <property type="molecule type" value="Genomic_DNA"/>
</dbReference>
<dbReference type="EMBL" id="M26157">
    <property type="protein sequence ID" value="AAA30770.1"/>
    <property type="molecule type" value="mRNA"/>
</dbReference>
<dbReference type="EMBL" id="M26158">
    <property type="protein sequence ID" value="AAA30771.1"/>
    <property type="molecule type" value="mRNA"/>
</dbReference>
<dbReference type="EMBL" id="M26178">
    <property type="protein sequence ID" value="AAA51601.1"/>
    <property type="status" value="ALT_SEQ"/>
    <property type="molecule type" value="Genomic_DNA"/>
</dbReference>
<dbReference type="EMBL" id="L34940">
    <property type="protein sequence ID" value="AAA51601.1"/>
    <property type="status" value="JOINED"/>
    <property type="molecule type" value="Genomic_DNA"/>
</dbReference>
<dbReference type="EMBL" id="L34941">
    <property type="protein sequence ID" value="AAA51601.1"/>
    <property type="status" value="JOINED"/>
    <property type="molecule type" value="Genomic_DNA"/>
</dbReference>
<dbReference type="EMBL" id="L34942">
    <property type="protein sequence ID" value="AAA51601.1"/>
    <property type="status" value="JOINED"/>
    <property type="molecule type" value="Genomic_DNA"/>
</dbReference>
<dbReference type="EMBL" id="L34943">
    <property type="protein sequence ID" value="AAA51601.1"/>
    <property type="status" value="JOINED"/>
    <property type="molecule type" value="Genomic_DNA"/>
</dbReference>
<dbReference type="EMBL" id="L34944">
    <property type="protein sequence ID" value="AAA51601.1"/>
    <property type="status" value="JOINED"/>
    <property type="molecule type" value="Genomic_DNA"/>
</dbReference>
<dbReference type="EMBL" id="L34946">
    <property type="protein sequence ID" value="AAA51601.1"/>
    <property type="status" value="JOINED"/>
    <property type="molecule type" value="Genomic_DNA"/>
</dbReference>
<dbReference type="EMBL" id="L34947">
    <property type="protein sequence ID" value="AAA51601.1"/>
    <property type="status" value="JOINED"/>
    <property type="molecule type" value="Genomic_DNA"/>
</dbReference>
<dbReference type="EMBL" id="L34948">
    <property type="protein sequence ID" value="AAA51601.1"/>
    <property type="status" value="JOINED"/>
    <property type="molecule type" value="Genomic_DNA"/>
</dbReference>
<dbReference type="EMBL" id="L34949">
    <property type="protein sequence ID" value="AAA51601.1"/>
    <property type="status" value="JOINED"/>
    <property type="molecule type" value="Genomic_DNA"/>
</dbReference>
<dbReference type="EMBL" id="L34950">
    <property type="protein sequence ID" value="AAA51601.1"/>
    <property type="status" value="JOINED"/>
    <property type="molecule type" value="Genomic_DNA"/>
</dbReference>
<dbReference type="EMBL" id="L34951">
    <property type="protein sequence ID" value="AAA51601.1"/>
    <property type="status" value="JOINED"/>
    <property type="molecule type" value="Genomic_DNA"/>
</dbReference>
<dbReference type="EMBL" id="M26178">
    <property type="protein sequence ID" value="AAA51602.1"/>
    <property type="status" value="ALT_SEQ"/>
    <property type="molecule type" value="Genomic_DNA"/>
</dbReference>
<dbReference type="EMBL" id="L34940">
    <property type="protein sequence ID" value="AAA51602.1"/>
    <property type="status" value="JOINED"/>
    <property type="molecule type" value="Genomic_DNA"/>
</dbReference>
<dbReference type="EMBL" id="L34941">
    <property type="protein sequence ID" value="AAA51602.1"/>
    <property type="status" value="JOINED"/>
    <property type="molecule type" value="Genomic_DNA"/>
</dbReference>
<dbReference type="EMBL" id="L34943">
    <property type="protein sequence ID" value="AAA51602.1"/>
    <property type="status" value="JOINED"/>
    <property type="molecule type" value="Genomic_DNA"/>
</dbReference>
<dbReference type="EMBL" id="L34944">
    <property type="protein sequence ID" value="AAA51602.1"/>
    <property type="status" value="JOINED"/>
    <property type="molecule type" value="Genomic_DNA"/>
</dbReference>
<dbReference type="EMBL" id="L34946">
    <property type="protein sequence ID" value="AAA51602.1"/>
    <property type="status" value="JOINED"/>
    <property type="molecule type" value="Genomic_DNA"/>
</dbReference>
<dbReference type="EMBL" id="L34948">
    <property type="protein sequence ID" value="AAA51602.1"/>
    <property type="status" value="JOINED"/>
    <property type="molecule type" value="Genomic_DNA"/>
</dbReference>
<dbReference type="EMBL" id="L34949">
    <property type="protein sequence ID" value="AAA51602.1"/>
    <property type="status" value="JOINED"/>
    <property type="molecule type" value="Genomic_DNA"/>
</dbReference>
<dbReference type="EMBL" id="L34950">
    <property type="protein sequence ID" value="AAA51602.1"/>
    <property type="status" value="JOINED"/>
    <property type="molecule type" value="Genomic_DNA"/>
</dbReference>
<dbReference type="EMBL" id="L34951">
    <property type="protein sequence ID" value="AAA51602.1"/>
    <property type="status" value="JOINED"/>
    <property type="molecule type" value="Genomic_DNA"/>
</dbReference>
<dbReference type="EMBL" id="M26178">
    <property type="protein sequence ID" value="AAA51603.1"/>
    <property type="status" value="ALT_SEQ"/>
    <property type="molecule type" value="Genomic_DNA"/>
</dbReference>
<dbReference type="EMBL" id="L34940">
    <property type="protein sequence ID" value="AAA51603.1"/>
    <property type="status" value="JOINED"/>
    <property type="molecule type" value="Genomic_DNA"/>
</dbReference>
<dbReference type="EMBL" id="L34941">
    <property type="protein sequence ID" value="AAA51603.1"/>
    <property type="status" value="JOINED"/>
    <property type="molecule type" value="Genomic_DNA"/>
</dbReference>
<dbReference type="EMBL" id="L34943">
    <property type="protein sequence ID" value="AAA51603.1"/>
    <property type="status" value="JOINED"/>
    <property type="molecule type" value="Genomic_DNA"/>
</dbReference>
<dbReference type="EMBL" id="L34944">
    <property type="protein sequence ID" value="AAA51603.1"/>
    <property type="status" value="JOINED"/>
    <property type="molecule type" value="Genomic_DNA"/>
</dbReference>
<dbReference type="EMBL" id="L34946">
    <property type="protein sequence ID" value="AAA51603.1"/>
    <property type="status" value="JOINED"/>
    <property type="molecule type" value="Genomic_DNA"/>
</dbReference>
<dbReference type="EMBL" id="L34948">
    <property type="protein sequence ID" value="AAA51603.1"/>
    <property type="status" value="JOINED"/>
    <property type="molecule type" value="Genomic_DNA"/>
</dbReference>
<dbReference type="EMBL" id="L34950">
    <property type="protein sequence ID" value="AAA51603.1"/>
    <property type="status" value="JOINED"/>
    <property type="molecule type" value="Genomic_DNA"/>
</dbReference>
<dbReference type="EMBL" id="L34951">
    <property type="protein sequence ID" value="AAA51603.1"/>
    <property type="status" value="JOINED"/>
    <property type="molecule type" value="Genomic_DNA"/>
</dbReference>
<dbReference type="EMBL" id="M26178">
    <property type="protein sequence ID" value="AAA51604.1"/>
    <property type="status" value="ALT_SEQ"/>
    <property type="molecule type" value="Genomic_DNA"/>
</dbReference>
<dbReference type="EMBL" id="L34940">
    <property type="protein sequence ID" value="AAA51604.1"/>
    <property type="status" value="JOINED"/>
    <property type="molecule type" value="Genomic_DNA"/>
</dbReference>
<dbReference type="EMBL" id="L34941">
    <property type="protein sequence ID" value="AAA51604.1"/>
    <property type="status" value="JOINED"/>
    <property type="molecule type" value="Genomic_DNA"/>
</dbReference>
<dbReference type="EMBL" id="L34944">
    <property type="protein sequence ID" value="AAA51604.1"/>
    <property type="status" value="JOINED"/>
    <property type="molecule type" value="Genomic_DNA"/>
</dbReference>
<dbReference type="EMBL" id="L34946">
    <property type="protein sequence ID" value="AAA51604.1"/>
    <property type="status" value="JOINED"/>
    <property type="molecule type" value="Genomic_DNA"/>
</dbReference>
<dbReference type="EMBL" id="L34947">
    <property type="protein sequence ID" value="AAA51604.1"/>
    <property type="status" value="JOINED"/>
    <property type="molecule type" value="Genomic_DNA"/>
</dbReference>
<dbReference type="EMBL" id="L34948">
    <property type="protein sequence ID" value="AAA51604.1"/>
    <property type="status" value="JOINED"/>
    <property type="molecule type" value="Genomic_DNA"/>
</dbReference>
<dbReference type="EMBL" id="L34949">
    <property type="protein sequence ID" value="AAA51604.1"/>
    <property type="status" value="JOINED"/>
    <property type="molecule type" value="Genomic_DNA"/>
</dbReference>
<dbReference type="EMBL" id="L34950">
    <property type="protein sequence ID" value="AAA51604.1"/>
    <property type="status" value="JOINED"/>
    <property type="molecule type" value="Genomic_DNA"/>
</dbReference>
<dbReference type="EMBL" id="L34951">
    <property type="protein sequence ID" value="AAA51604.1"/>
    <property type="status" value="JOINED"/>
    <property type="molecule type" value="Genomic_DNA"/>
</dbReference>
<dbReference type="EMBL" id="M26178">
    <property type="protein sequence ID" value="AAA51605.1"/>
    <property type="status" value="ALT_SEQ"/>
    <property type="molecule type" value="Genomic_DNA"/>
</dbReference>
<dbReference type="EMBL" id="L34940">
    <property type="protein sequence ID" value="AAA51605.1"/>
    <property type="status" value="JOINED"/>
    <property type="molecule type" value="Genomic_DNA"/>
</dbReference>
<dbReference type="EMBL" id="L34941">
    <property type="protein sequence ID" value="AAA51605.1"/>
    <property type="status" value="JOINED"/>
    <property type="molecule type" value="Genomic_DNA"/>
</dbReference>
<dbReference type="EMBL" id="L34944">
    <property type="protein sequence ID" value="AAA51605.1"/>
    <property type="status" value="JOINED"/>
    <property type="molecule type" value="Genomic_DNA"/>
</dbReference>
<dbReference type="EMBL" id="L34946">
    <property type="protein sequence ID" value="AAA51605.1"/>
    <property type="status" value="JOINED"/>
    <property type="molecule type" value="Genomic_DNA"/>
</dbReference>
<dbReference type="EMBL" id="L34948">
    <property type="protein sequence ID" value="AAA51605.1"/>
    <property type="status" value="JOINED"/>
    <property type="molecule type" value="Genomic_DNA"/>
</dbReference>
<dbReference type="EMBL" id="L34949">
    <property type="protein sequence ID" value="AAA51605.1"/>
    <property type="status" value="JOINED"/>
    <property type="molecule type" value="Genomic_DNA"/>
</dbReference>
<dbReference type="EMBL" id="L34950">
    <property type="protein sequence ID" value="AAA51605.1"/>
    <property type="status" value="JOINED"/>
    <property type="molecule type" value="Genomic_DNA"/>
</dbReference>
<dbReference type="EMBL" id="L34951">
    <property type="protein sequence ID" value="AAA51605.1"/>
    <property type="status" value="JOINED"/>
    <property type="molecule type" value="Genomic_DNA"/>
</dbReference>
<dbReference type="EMBL" id="M26178">
    <property type="protein sequence ID" value="AAA51606.1"/>
    <property type="status" value="ALT_SEQ"/>
    <property type="molecule type" value="Genomic_DNA"/>
</dbReference>
<dbReference type="EMBL" id="L34940">
    <property type="protein sequence ID" value="AAA51606.1"/>
    <property type="status" value="JOINED"/>
    <property type="molecule type" value="Genomic_DNA"/>
</dbReference>
<dbReference type="EMBL" id="L34941">
    <property type="protein sequence ID" value="AAA51606.1"/>
    <property type="status" value="JOINED"/>
    <property type="molecule type" value="Genomic_DNA"/>
</dbReference>
<dbReference type="EMBL" id="L34944">
    <property type="protein sequence ID" value="AAA51606.1"/>
    <property type="status" value="JOINED"/>
    <property type="molecule type" value="Genomic_DNA"/>
</dbReference>
<dbReference type="EMBL" id="L34946">
    <property type="protein sequence ID" value="AAA51606.1"/>
    <property type="status" value="JOINED"/>
    <property type="molecule type" value="Genomic_DNA"/>
</dbReference>
<dbReference type="EMBL" id="L34948">
    <property type="protein sequence ID" value="AAA51606.1"/>
    <property type="status" value="JOINED"/>
    <property type="molecule type" value="Genomic_DNA"/>
</dbReference>
<dbReference type="EMBL" id="L34950">
    <property type="protein sequence ID" value="AAA51606.1"/>
    <property type="status" value="JOINED"/>
    <property type="molecule type" value="Genomic_DNA"/>
</dbReference>
<dbReference type="EMBL" id="L34951">
    <property type="protein sequence ID" value="AAA51606.1"/>
    <property type="status" value="JOINED"/>
    <property type="molecule type" value="Genomic_DNA"/>
</dbReference>
<dbReference type="EMBL" id="BC109941">
    <property type="protein sequence ID" value="AAI09942.1"/>
    <property type="molecule type" value="mRNA"/>
</dbReference>
<dbReference type="PIR" id="A31939">
    <property type="entry name" value="QRBOT1"/>
</dbReference>
<dbReference type="PIR" id="B31939">
    <property type="entry name" value="QRBOT2"/>
</dbReference>
<dbReference type="RefSeq" id="NP_776531.1">
    <molecule id="P29172-1"/>
    <property type="nucleotide sequence ID" value="NM_174106.2"/>
</dbReference>
<dbReference type="BMRB" id="P29172"/>
<dbReference type="SMR" id="P29172"/>
<dbReference type="BioGRID" id="158649">
    <property type="interactions" value="7"/>
</dbReference>
<dbReference type="FunCoup" id="P29172">
    <property type="interactions" value="983"/>
</dbReference>
<dbReference type="IntAct" id="P29172">
    <property type="interactions" value="4"/>
</dbReference>
<dbReference type="MINT" id="P29172"/>
<dbReference type="BindingDB" id="P29172"/>
<dbReference type="ChEMBL" id="CHEMBL3638363"/>
<dbReference type="GlyGen" id="P29172">
    <property type="glycosylation" value="1 site, 1 O-linked glycan (1 site)"/>
</dbReference>
<dbReference type="iPTMnet" id="P29172"/>
<dbReference type="PaxDb" id="9913-ENSBTAP00000054412"/>
<dbReference type="Ensembl" id="ENSBTAT00000064492.3">
    <molecule id="P29172-1"/>
    <property type="protein sequence ID" value="ENSBTAP00000054412.2"/>
    <property type="gene ID" value="ENSBTAG00000017512.7"/>
</dbReference>
<dbReference type="GeneID" id="281296"/>
<dbReference type="KEGG" id="bta:281296"/>
<dbReference type="CTD" id="4137"/>
<dbReference type="VEuPathDB" id="HostDB:ENSBTAG00000017512"/>
<dbReference type="eggNOG" id="KOG2418">
    <property type="taxonomic scope" value="Eukaryota"/>
</dbReference>
<dbReference type="GeneTree" id="ENSGT00940000155494"/>
<dbReference type="HOGENOM" id="CLU_021741_3_1_1"/>
<dbReference type="InParanoid" id="P29172"/>
<dbReference type="TreeFam" id="TF316358"/>
<dbReference type="Proteomes" id="UP000009136">
    <property type="component" value="Chromosome 19"/>
</dbReference>
<dbReference type="Bgee" id="ENSBTAG00000017512">
    <property type="expression patterns" value="Expressed in prefrontal cortex and 99 other cell types or tissues"/>
</dbReference>
<dbReference type="GO" id="GO:0030424">
    <property type="term" value="C:axon"/>
    <property type="evidence" value="ECO:0007669"/>
    <property type="project" value="UniProtKB-SubCell"/>
</dbReference>
<dbReference type="GO" id="GO:0005737">
    <property type="term" value="C:cytoplasm"/>
    <property type="evidence" value="ECO:0000250"/>
    <property type="project" value="UniProtKB"/>
</dbReference>
<dbReference type="GO" id="GO:0005829">
    <property type="term" value="C:cytosol"/>
    <property type="evidence" value="ECO:0007669"/>
    <property type="project" value="UniProtKB-SubCell"/>
</dbReference>
<dbReference type="GO" id="GO:0030425">
    <property type="term" value="C:dendrite"/>
    <property type="evidence" value="ECO:0000250"/>
    <property type="project" value="UniProtKB"/>
</dbReference>
<dbReference type="GO" id="GO:0005576">
    <property type="term" value="C:extracellular region"/>
    <property type="evidence" value="ECO:0007669"/>
    <property type="project" value="UniProtKB-SubCell"/>
</dbReference>
<dbReference type="GO" id="GO:0005874">
    <property type="term" value="C:microtubule"/>
    <property type="evidence" value="ECO:0007669"/>
    <property type="project" value="UniProtKB-KW"/>
</dbReference>
<dbReference type="GO" id="GO:0005886">
    <property type="term" value="C:plasma membrane"/>
    <property type="evidence" value="ECO:0007669"/>
    <property type="project" value="UniProtKB-SubCell"/>
</dbReference>
<dbReference type="GO" id="GO:0008017">
    <property type="term" value="F:microtubule binding"/>
    <property type="evidence" value="ECO:0007669"/>
    <property type="project" value="InterPro"/>
</dbReference>
<dbReference type="InterPro" id="IPR027324">
    <property type="entry name" value="MAP2/MAP4/Tau"/>
</dbReference>
<dbReference type="InterPro" id="IPR001084">
    <property type="entry name" value="MAP_tubulin-bd_rpt"/>
</dbReference>
<dbReference type="InterPro" id="IPR002955">
    <property type="entry name" value="Tau"/>
</dbReference>
<dbReference type="PANTHER" id="PTHR11501">
    <property type="entry name" value="MICROTUBULE-ASSOCIATED PROTEIN"/>
    <property type="match status" value="1"/>
</dbReference>
<dbReference type="PANTHER" id="PTHR11501:SF14">
    <property type="entry name" value="MICROTUBULE-ASSOCIATED PROTEIN TAU"/>
    <property type="match status" value="1"/>
</dbReference>
<dbReference type="Pfam" id="PF00418">
    <property type="entry name" value="Tubulin-binding"/>
    <property type="match status" value="4"/>
</dbReference>
<dbReference type="PRINTS" id="PR01261">
    <property type="entry name" value="TAUPROTEIN"/>
</dbReference>
<dbReference type="PROSITE" id="PS00229">
    <property type="entry name" value="TAU_MAP_1"/>
    <property type="match status" value="4"/>
</dbReference>
<dbReference type="PROSITE" id="PS51491">
    <property type="entry name" value="TAU_MAP_2"/>
    <property type="match status" value="4"/>
</dbReference>
<protein>
    <recommendedName>
        <fullName>Microtubule-associated protein tau</fullName>
    </recommendedName>
    <alternativeName>
        <fullName>Neurofibrillary tangle protein</fullName>
    </alternativeName>
    <alternativeName>
        <fullName>Paired helical filament-tau</fullName>
        <shortName>PHF-tau</shortName>
    </alternativeName>
</protein>
<organism>
    <name type="scientific">Bos taurus</name>
    <name type="common">Bovine</name>
    <dbReference type="NCBI Taxonomy" id="9913"/>
    <lineage>
        <taxon>Eukaryota</taxon>
        <taxon>Metazoa</taxon>
        <taxon>Chordata</taxon>
        <taxon>Craniata</taxon>
        <taxon>Vertebrata</taxon>
        <taxon>Euteleostomi</taxon>
        <taxon>Mammalia</taxon>
        <taxon>Eutheria</taxon>
        <taxon>Laurasiatheria</taxon>
        <taxon>Artiodactyla</taxon>
        <taxon>Ruminantia</taxon>
        <taxon>Pecora</taxon>
        <taxon>Bovidae</taxon>
        <taxon>Bovinae</taxon>
        <taxon>Bos</taxon>
    </lineage>
</organism>
<accession>P29172</accession>
<accession>P29173</accession>
<accession>Q28185</accession>
<accession>Q28186</accession>
<accession>Q28187</accession>
<accession>Q28188</accession>
<accession>Q28189</accession>
<accession>Q28190</accession>
<accession>Q32KT2</accession>
<comment type="function">
    <text>Promotes microtubule assembly and stability, and might be involved in the establishment and maintenance of neuronal polarity. The C-terminus binds axonal microtubules while the N-terminus binds neural plasma membrane components, suggesting that tau functions as a linker protein between both. Axonal polarity is predetermined by tau localization (in the neuronal cell) in the domain of the cell body defined by the centrosome. The short isoforms allow plasticity of the cytoskeleton whereas the longer isoforms may preferentially play a role in its stabilization.</text>
</comment>
<comment type="subunit">
    <text evidence="2 3 4">Interacts with MARK1, MARK2, MARK3 and MARK4 (By similarity). Interacts with SQSTM1 when polyubiquitinated (By similarity). Interacts with PSMC2 through SQSTM1 (By similarity). Interacts with FKBP4 (By similarity). Binds to CSNK1D (By similarity). Interacts with SGK1 (By similarity). Interacts with PIN1 (By similarity). Interacts with LRRK2 (By similarity). Interacts with LRP1, leading to endocytosis; this interaction is reduced in the presence of LRPAP1/RAP (By similarity).</text>
</comment>
<comment type="interaction">
    <interactant intactId="EBI-7291149">
        <id>P29172</id>
    </interactant>
    <interactant intactId="EBI-347088">
        <id>P63104</id>
        <label>YWHAZ</label>
    </interactant>
    <organismsDiffer>true</organismsDiffer>
    <experiments>2</experiments>
</comment>
<comment type="subcellular location">
    <subcellularLocation>
        <location>Cytoplasm</location>
        <location>Cytosol</location>
    </subcellularLocation>
    <subcellularLocation>
        <location>Cell membrane</location>
        <topology>Peripheral membrane protein</topology>
        <orientation>Cytoplasmic side</orientation>
    </subcellularLocation>
    <subcellularLocation>
        <location>Cytoplasm</location>
        <location>Cytoskeleton</location>
    </subcellularLocation>
    <subcellularLocation>
        <location>Cell projection</location>
        <location>Axon</location>
    </subcellularLocation>
    <subcellularLocation>
        <location evidence="2">Cytoplasm</location>
    </subcellularLocation>
    <subcellularLocation>
        <location evidence="2">Cell projection</location>
        <location evidence="2">Dendrite</location>
    </subcellularLocation>
    <subcellularLocation>
        <location evidence="2">Secreted</location>
    </subcellularLocation>
    <text>Mostly found in the axons of neurons, in the cytosol and in association with plasma membrane components. Can be secreted; the secretion is dependent on protein unfolding and facilitated by the cargo receptor TMED10; it results in protein translocation from the cytoplasm into the ERGIC (endoplasmic reticulum-Golgi intermediate compartment) followed by vesicle entry and secretion.</text>
</comment>
<comment type="alternative products">
    <event type="alternative splicing"/>
    <isoform>
        <id>P29172-1</id>
        <name>Tau-A</name>
        <name>PBT43I12</name>
        <sequence type="displayed"/>
    </isoform>
    <isoform>
        <id>P29172-2</id>
        <name>Tau-B</name>
        <name>PBT43-12</name>
        <sequence type="described" ref="VSP_003169"/>
    </isoform>
    <isoform>
        <id>P29172-3</id>
        <name>Tau-C</name>
        <sequence type="described" ref="VSP_003169 VSP_003170"/>
    </isoform>
    <isoform>
        <id>P29172-4</id>
        <name>Tau-D</name>
        <sequence type="described" ref="VSP_003167"/>
    </isoform>
    <isoform>
        <id>P29172-5</id>
        <name>Tau-E</name>
        <sequence type="described" ref="VSP_003167 VSP_003169"/>
    </isoform>
    <isoform>
        <id>P29172-6</id>
        <name>Tau-F</name>
        <sequence type="described" ref="VSP_003167 VSP_003169 VSP_003170"/>
    </isoform>
    <isoform>
        <id>P29172-7</id>
        <name>Tau-G</name>
        <name>PBT4</name>
        <sequence type="described" ref="VSP_003165 VSP_003169"/>
    </isoform>
    <isoform>
        <id>P29172-8</id>
        <name>Tau-H</name>
        <name>PBT7</name>
        <sequence type="described" ref="VSP_003166 VSP_003169"/>
    </isoform>
    <isoform>
        <id>P29172-9</id>
        <name>Tau-I</name>
        <sequence type="described" ref="VSP_003171"/>
    </isoform>
    <isoform>
        <id>P29172-10</id>
        <name>Tau-J</name>
        <sequence type="described" ref="VSP_003167 VSP_003169 VSP_003171"/>
    </isoform>
    <isoform>
        <id>P29172-11</id>
        <name>Tau-K</name>
        <sequence type="described" ref="VSP_003167 VSP_003169 VSP_003170 VSP_003171"/>
    </isoform>
    <isoform>
        <id>P29172-12</id>
        <name>Tau-L</name>
        <sequence type="described" ref="VSP_003167 VSP_003168 VSP_003171"/>
    </isoform>
    <isoform>
        <id>P29172-13</id>
        <name>Tau-M</name>
        <sequence type="described" ref="VSP_003167 VSP_003168 VSP_003169 VSP_003171"/>
    </isoform>
    <isoform>
        <id>P29172-14</id>
        <name>Tau-N</name>
        <sequence type="described" ref="VSP_003167 VSP_003168 VSP_003169 VSP_003170 VSP_003171"/>
    </isoform>
    <isoform>
        <id>P29172-15</id>
        <name>Tau-O</name>
        <sequence type="described" ref="VSP_003172"/>
    </isoform>
    <isoform>
        <id>P29172-16</id>
        <name>Tau-P</name>
        <sequence type="described" ref="VSP_003167 VSP_003169 VSP_003172"/>
    </isoform>
    <isoform>
        <id>P29172-17</id>
        <name>Tau-Q</name>
        <sequence type="described" ref="VSP_003167 VSP_003169 VSP_003170 VSP_003172"/>
    </isoform>
    <isoform>
        <id>P29172-18</id>
        <name>Tau-R</name>
        <sequence type="described" ref="VSP_003167 VSP_003168 VSP_003172"/>
    </isoform>
    <isoform>
        <id>P29172-19</id>
        <name>Tau-S</name>
        <sequence type="described" ref="VSP_003167 VSP_003168 VSP_003169 VSP_003172"/>
    </isoform>
    <isoform>
        <id>P29172-20</id>
        <name>Tau-T</name>
        <sequence type="described" ref="VSP_003167 VSP_003168 VSP_003169 VSP_003170 VSP_003172"/>
    </isoform>
    <text>Additional isoforms seem to exist. Isoforms differ from each other by the presence or absence of up to 6 of the 14 exons. One of these optional exons contains the additional tau/MAP repeat. Tau-A cDNA has been constructed from two overlapping cDNAs by PubMed:2498649: Tau-G and Tau-H sequences begin with exon 6 or a part of it (exon 6 is missing in isoforms that begin with exon 1). 3 different C-termini are obtained either by the retention or the splicing of intron 13/14 (2 different 5' splice donors).</text>
</comment>
<comment type="tissue specificity">
    <text>Expressed in neurons.</text>
</comment>
<comment type="induction">
    <text>During neurite outgrowth.</text>
</comment>
<comment type="domain">
    <text>The tau/MAP repeat binds to tubulin. Type I isoforms contain 3 repeats while type II isoforms contain 4 repeats.</text>
</comment>
<comment type="PTM">
    <text evidence="1">Polyubiquitinated. Requires functional TRAF6 and may provoke SQSTM1-dependent degradation by the proteasome (By similarity).</text>
</comment>
<comment type="PTM">
    <text evidence="1 2">Phosphorylation at various serine and threonine residues in S-P or T-P motifs by proline-directed protein kinases (PDPK1, CDK1, CDK5, GSK3, MAPK) (a few sites per protein in interphase, more in mitosis), and at serine residues in K-X-G-S motifs by MAP/microtubule affinity-regulating kinase (MARK1, MARK2, MARK3, MARK4), causing detachment from microtubules, and their disassembly (By similarity). Phosphorylation at Ser-269 by BRSK1 and BRSK2 in neurons affects ability to bind microtubules and plays a role in neuron polarization. Phosphorylated by PHK. Dephosphorylation at several serine and threonine residues by the serine/threonine phosphatase PPP5C (By similarity).</text>
</comment>
<comment type="PTM">
    <text evidence="7">O-glycosylated; contains at least 4 GlcNAc. Site-specific or stoichiometric changes in glycosylation may modulate tau function and also play a role in PHF's formation.</text>
</comment>
<sequence>MAEPRQEFDVMEDHAQGDYTLQDQEGDMDPGLKESPLQTPADDGSEEPGSETSDAKSTPTAEDATAPLVDEGAPGEQAAAQAPAEIPEGTAAEEAGIGDTSNLEDQAAGHVTQARMVSKGKDGTGPDDKKTKGADGKPGTKIATPRGAAPPGQKGQANATRIPAKTTPTPKTSPATMQVQKKPPPAGAKSERGESGKSGDRSGYSSPGSPGTPGSRSRTPSLPTPPTREPKKVAVVRTPPKSPSAAKSRLQAAPGPMPDLKNVKSKIGSTENLKHQPGGGKVQIINKKLDLSNVQSKCGSKDNIKHVPGGGSVQIVYKPVDLSKVTSKCGSLGNIHHKPGGGQVEVKSEKLDFKDRVQSKIGSLDNITHVPGGGNKKIETHKLTFRENAKAKTDHGAEIVYKSPVVSGDTSPRHLSNVSSTGSIDMVDSPQLATLADEVSASLAKQGL</sequence>
<name>TAU_BOVIN</name>
<proteinExistence type="evidence at protein level"/>
<evidence type="ECO:0000250" key="1"/>
<evidence type="ECO:0000250" key="2">
    <source>
        <dbReference type="UniProtKB" id="P10636"/>
    </source>
</evidence>
<evidence type="ECO:0000250" key="3">
    <source>
        <dbReference type="UniProtKB" id="P10637"/>
    </source>
</evidence>
<evidence type="ECO:0000250" key="4">
    <source>
        <dbReference type="UniProtKB" id="P19332"/>
    </source>
</evidence>
<evidence type="ECO:0000255" key="5">
    <source>
        <dbReference type="PROSITE-ProRule" id="PRU00824"/>
    </source>
</evidence>
<evidence type="ECO:0000256" key="6">
    <source>
        <dbReference type="SAM" id="MobiDB-lite"/>
    </source>
</evidence>
<evidence type="ECO:0000269" key="7">
    <source>
    </source>
</evidence>
<evidence type="ECO:0000303" key="8">
    <source>
    </source>
</evidence>
<evidence type="ECO:0000303" key="9">
    <source ref="3"/>
</evidence>
<evidence type="ECO:0000305" key="10"/>